<feature type="chain" id="PRO_1000019941" description="Probable cytosol aminopeptidase">
    <location>
        <begin position="1"/>
        <end position="519"/>
    </location>
</feature>
<feature type="active site" evidence="1">
    <location>
        <position position="295"/>
    </location>
</feature>
<feature type="active site" evidence="1">
    <location>
        <position position="369"/>
    </location>
</feature>
<feature type="binding site" evidence="1">
    <location>
        <position position="283"/>
    </location>
    <ligand>
        <name>Mn(2+)</name>
        <dbReference type="ChEBI" id="CHEBI:29035"/>
        <label>2</label>
    </ligand>
</feature>
<feature type="binding site" evidence="1">
    <location>
        <position position="288"/>
    </location>
    <ligand>
        <name>Mn(2+)</name>
        <dbReference type="ChEBI" id="CHEBI:29035"/>
        <label>1</label>
    </ligand>
</feature>
<feature type="binding site" evidence="1">
    <location>
        <position position="288"/>
    </location>
    <ligand>
        <name>Mn(2+)</name>
        <dbReference type="ChEBI" id="CHEBI:29035"/>
        <label>2</label>
    </ligand>
</feature>
<feature type="binding site" evidence="1">
    <location>
        <position position="306"/>
    </location>
    <ligand>
        <name>Mn(2+)</name>
        <dbReference type="ChEBI" id="CHEBI:29035"/>
        <label>2</label>
    </ligand>
</feature>
<feature type="binding site" evidence="1">
    <location>
        <position position="365"/>
    </location>
    <ligand>
        <name>Mn(2+)</name>
        <dbReference type="ChEBI" id="CHEBI:29035"/>
        <label>1</label>
    </ligand>
</feature>
<feature type="binding site" evidence="1">
    <location>
        <position position="367"/>
    </location>
    <ligand>
        <name>Mn(2+)</name>
        <dbReference type="ChEBI" id="CHEBI:29035"/>
        <label>1</label>
    </ligand>
</feature>
<feature type="binding site" evidence="1">
    <location>
        <position position="367"/>
    </location>
    <ligand>
        <name>Mn(2+)</name>
        <dbReference type="ChEBI" id="CHEBI:29035"/>
        <label>2</label>
    </ligand>
</feature>
<evidence type="ECO:0000255" key="1">
    <source>
        <dbReference type="HAMAP-Rule" id="MF_00181"/>
    </source>
</evidence>
<keyword id="KW-0031">Aminopeptidase</keyword>
<keyword id="KW-0963">Cytoplasm</keyword>
<keyword id="KW-0378">Hydrolase</keyword>
<keyword id="KW-0464">Manganese</keyword>
<keyword id="KW-0479">Metal-binding</keyword>
<keyword id="KW-0645">Protease</keyword>
<gene>
    <name evidence="1" type="primary">pepA</name>
    <name type="ordered locus">MUL_3573</name>
</gene>
<sequence>MTAESGDQIPTVHVATSLPKRRVSSSVLIVPVVSTGDDEQSGERPGAVVASAEPFLSADAIAEIEAGLRALDATGASDQVHRLVVSSLPVSSVLTVGLGKPRYEWTPDAVRRAAGAAARALGTAKAVVTTLADLPGDGVCAAAVEGLILGSYRFSAFRSAKTAPKDAGLHKITVLTTTKDARKHCAHGAAVATAVATARDLVNTPPSHLYPAELARRAKVLGESVGLEVQVLDEKALQKAGYGGLVGVGQGSSRPPRLVRLTHRGSRLAKNPRRAKKVALVGKGVTFDTGGISIKPAASMHYMTSDMGGAAAVIATVALAAQLELPINVIATVPIAENMPSATAQRPGDVLTQYGGTTVEVLNTDAEGRLILADAIVRACEDNPDYLIETSTLTGAQTVALGARIPGVMGSDEFRDRVAAISQQVGENGWPMPLPDELKDDLKSTVADLANVSGQRFAGMLVAGVFLREFVADAVDWAHIDVAGPAYNTGSAWGYTPKGATGVPTRTMFAVLEDIAANG</sequence>
<organism>
    <name type="scientific">Mycobacterium ulcerans (strain Agy99)</name>
    <dbReference type="NCBI Taxonomy" id="362242"/>
    <lineage>
        <taxon>Bacteria</taxon>
        <taxon>Bacillati</taxon>
        <taxon>Actinomycetota</taxon>
        <taxon>Actinomycetes</taxon>
        <taxon>Mycobacteriales</taxon>
        <taxon>Mycobacteriaceae</taxon>
        <taxon>Mycobacterium</taxon>
        <taxon>Mycobacterium ulcerans group</taxon>
    </lineage>
</organism>
<accession>A0PTP9</accession>
<proteinExistence type="inferred from homology"/>
<comment type="function">
    <text evidence="1">Presumably involved in the processing and regular turnover of intracellular proteins. Catalyzes the removal of unsubstituted N-terminal amino acids from various peptides.</text>
</comment>
<comment type="catalytic activity">
    <reaction evidence="1">
        <text>Release of an N-terminal amino acid, Xaa-|-Yaa-, in which Xaa is preferably Leu, but may be other amino acids including Pro although not Arg or Lys, and Yaa may be Pro. Amino acid amides and methyl esters are also readily hydrolyzed, but rates on arylamides are exceedingly low.</text>
        <dbReference type="EC" id="3.4.11.1"/>
    </reaction>
</comment>
<comment type="catalytic activity">
    <reaction evidence="1">
        <text>Release of an N-terminal amino acid, preferentially leucine, but not glutamic or aspartic acids.</text>
        <dbReference type="EC" id="3.4.11.10"/>
    </reaction>
</comment>
<comment type="cofactor">
    <cofactor evidence="1">
        <name>Mn(2+)</name>
        <dbReference type="ChEBI" id="CHEBI:29035"/>
    </cofactor>
    <text evidence="1">Binds 2 manganese ions per subunit.</text>
</comment>
<comment type="subcellular location">
    <subcellularLocation>
        <location evidence="1">Cytoplasm</location>
    </subcellularLocation>
</comment>
<comment type="similarity">
    <text evidence="1">Belongs to the peptidase M17 family.</text>
</comment>
<dbReference type="EC" id="3.4.11.1" evidence="1"/>
<dbReference type="EC" id="3.4.11.10" evidence="1"/>
<dbReference type="EMBL" id="CP000325">
    <property type="protein sequence ID" value="ABL05718.1"/>
    <property type="molecule type" value="Genomic_DNA"/>
</dbReference>
<dbReference type="RefSeq" id="WP_011741324.1">
    <property type="nucleotide sequence ID" value="NC_008611.1"/>
</dbReference>
<dbReference type="SMR" id="A0PTP9"/>
<dbReference type="KEGG" id="mul:MUL_3573"/>
<dbReference type="eggNOG" id="COG0260">
    <property type="taxonomic scope" value="Bacteria"/>
</dbReference>
<dbReference type="HOGENOM" id="CLU_013734_2_2_11"/>
<dbReference type="Proteomes" id="UP000000765">
    <property type="component" value="Chromosome"/>
</dbReference>
<dbReference type="GO" id="GO:0005737">
    <property type="term" value="C:cytoplasm"/>
    <property type="evidence" value="ECO:0007669"/>
    <property type="project" value="UniProtKB-SubCell"/>
</dbReference>
<dbReference type="GO" id="GO:0030145">
    <property type="term" value="F:manganese ion binding"/>
    <property type="evidence" value="ECO:0007669"/>
    <property type="project" value="UniProtKB-UniRule"/>
</dbReference>
<dbReference type="GO" id="GO:0070006">
    <property type="term" value="F:metalloaminopeptidase activity"/>
    <property type="evidence" value="ECO:0007669"/>
    <property type="project" value="InterPro"/>
</dbReference>
<dbReference type="GO" id="GO:0006508">
    <property type="term" value="P:proteolysis"/>
    <property type="evidence" value="ECO:0007669"/>
    <property type="project" value="UniProtKB-KW"/>
</dbReference>
<dbReference type="CDD" id="cd00433">
    <property type="entry name" value="Peptidase_M17"/>
    <property type="match status" value="1"/>
</dbReference>
<dbReference type="FunFam" id="3.40.630.10:FF:000087">
    <property type="entry name" value="Probable cytosol aminopeptidase"/>
    <property type="match status" value="1"/>
</dbReference>
<dbReference type="Gene3D" id="3.40.220.10">
    <property type="entry name" value="Leucine Aminopeptidase, subunit E, domain 1"/>
    <property type="match status" value="1"/>
</dbReference>
<dbReference type="Gene3D" id="3.40.630.10">
    <property type="entry name" value="Zn peptidases"/>
    <property type="match status" value="1"/>
</dbReference>
<dbReference type="HAMAP" id="MF_00181">
    <property type="entry name" value="Cytosol_peptidase_M17"/>
    <property type="match status" value="1"/>
</dbReference>
<dbReference type="InterPro" id="IPR011356">
    <property type="entry name" value="Leucine_aapep/pepB"/>
</dbReference>
<dbReference type="InterPro" id="IPR043472">
    <property type="entry name" value="Macro_dom-like"/>
</dbReference>
<dbReference type="InterPro" id="IPR000819">
    <property type="entry name" value="Peptidase_M17_C"/>
</dbReference>
<dbReference type="InterPro" id="IPR023042">
    <property type="entry name" value="Peptidase_M17_leu_NH2_pept"/>
</dbReference>
<dbReference type="InterPro" id="IPR008283">
    <property type="entry name" value="Peptidase_M17_N"/>
</dbReference>
<dbReference type="NCBIfam" id="NF002073">
    <property type="entry name" value="PRK00913.1-2"/>
    <property type="match status" value="1"/>
</dbReference>
<dbReference type="PANTHER" id="PTHR11963:SF23">
    <property type="entry name" value="CYTOSOL AMINOPEPTIDASE"/>
    <property type="match status" value="1"/>
</dbReference>
<dbReference type="PANTHER" id="PTHR11963">
    <property type="entry name" value="LEUCINE AMINOPEPTIDASE-RELATED"/>
    <property type="match status" value="1"/>
</dbReference>
<dbReference type="Pfam" id="PF00883">
    <property type="entry name" value="Peptidase_M17"/>
    <property type="match status" value="1"/>
</dbReference>
<dbReference type="Pfam" id="PF02789">
    <property type="entry name" value="Peptidase_M17_N"/>
    <property type="match status" value="1"/>
</dbReference>
<dbReference type="PRINTS" id="PR00481">
    <property type="entry name" value="LAMNOPPTDASE"/>
</dbReference>
<dbReference type="SUPFAM" id="SSF52949">
    <property type="entry name" value="Macro domain-like"/>
    <property type="match status" value="1"/>
</dbReference>
<dbReference type="SUPFAM" id="SSF53187">
    <property type="entry name" value="Zn-dependent exopeptidases"/>
    <property type="match status" value="1"/>
</dbReference>
<dbReference type="PROSITE" id="PS00631">
    <property type="entry name" value="CYTOSOL_AP"/>
    <property type="match status" value="1"/>
</dbReference>
<name>AMPA_MYCUA</name>
<protein>
    <recommendedName>
        <fullName evidence="1">Probable cytosol aminopeptidase</fullName>
        <ecNumber evidence="1">3.4.11.1</ecNumber>
    </recommendedName>
    <alternativeName>
        <fullName evidence="1">Leucine aminopeptidase</fullName>
        <shortName evidence="1">LAP</shortName>
        <ecNumber evidence="1">3.4.11.10</ecNumber>
    </alternativeName>
    <alternativeName>
        <fullName evidence="1">Leucyl aminopeptidase</fullName>
    </alternativeName>
</protein>
<reference key="1">
    <citation type="journal article" date="2007" name="Genome Res.">
        <title>Reductive evolution and niche adaptation inferred from the genome of Mycobacterium ulcerans, the causative agent of Buruli ulcer.</title>
        <authorList>
            <person name="Stinear T.P."/>
            <person name="Seemann T."/>
            <person name="Pidot S."/>
            <person name="Frigui W."/>
            <person name="Reysset G."/>
            <person name="Garnier T."/>
            <person name="Meurice G."/>
            <person name="Simon D."/>
            <person name="Bouchier C."/>
            <person name="Ma L."/>
            <person name="Tichit M."/>
            <person name="Porter J.L."/>
            <person name="Ryan J."/>
            <person name="Johnson P.D.R."/>
            <person name="Davies J.K."/>
            <person name="Jenkin G.A."/>
            <person name="Small P.L.C."/>
            <person name="Jones L.M."/>
            <person name="Tekaia F."/>
            <person name="Laval F."/>
            <person name="Daffe M."/>
            <person name="Parkhill J."/>
            <person name="Cole S.T."/>
        </authorList>
    </citation>
    <scope>NUCLEOTIDE SEQUENCE [LARGE SCALE GENOMIC DNA]</scope>
    <source>
        <strain>Agy99</strain>
    </source>
</reference>